<organism>
    <name type="scientific">Escherichia coli (strain K12 / DH10B)</name>
    <dbReference type="NCBI Taxonomy" id="316385"/>
    <lineage>
        <taxon>Bacteria</taxon>
        <taxon>Pseudomonadati</taxon>
        <taxon>Pseudomonadota</taxon>
        <taxon>Gammaproteobacteria</taxon>
        <taxon>Enterobacterales</taxon>
        <taxon>Enterobacteriaceae</taxon>
        <taxon>Escherichia</taxon>
    </lineage>
</organism>
<gene>
    <name evidence="1" type="primary">hflD</name>
    <name type="ordered locus">ECDH10B_1204</name>
</gene>
<sequence length="213" mass="22948">MAKNYYDITLALAGICQSARLVQQLAHQGHCDADALHVSLNSIIDMNPSSTLAVFGGSEANLRVGLETLLGVLNASSRQGLNAELTRYTLSLMVLERKLSSAKGALDTLGNRINGLQRQLEHFDLQSETLMSAMAAIYVDVISPLGPRIQVTGSPAVLQSPQVQAKVRATLLAGIRAAVLWHQVGGGRLQLMFSRNRLTTQAKQILAHLTPEL</sequence>
<accession>B1XA42</accession>
<comment type="function">
    <text evidence="1">Negative regulator of phage lambda lysogenization. Contributes to the degradation of the phage regulatory protein CII. Acts probably by holding CII on the membrane surface, away from the target promoters, but close to the FtsH protease.</text>
</comment>
<comment type="subunit">
    <text evidence="1">Interacts with CII protein from phage lambda.</text>
</comment>
<comment type="subcellular location">
    <subcellularLocation>
        <location>Cytoplasm</location>
    </subcellularLocation>
    <subcellularLocation>
        <location evidence="1">Cell inner membrane</location>
        <topology evidence="1">Peripheral membrane protein</topology>
        <orientation evidence="1">Cytoplasmic side</orientation>
    </subcellularLocation>
</comment>
<comment type="similarity">
    <text evidence="1">Belongs to the HflD family.</text>
</comment>
<name>HFLD_ECODH</name>
<proteinExistence type="inferred from homology"/>
<evidence type="ECO:0000255" key="1">
    <source>
        <dbReference type="HAMAP-Rule" id="MF_00695"/>
    </source>
</evidence>
<reference key="1">
    <citation type="journal article" date="2008" name="J. Bacteriol.">
        <title>The complete genome sequence of Escherichia coli DH10B: insights into the biology of a laboratory workhorse.</title>
        <authorList>
            <person name="Durfee T."/>
            <person name="Nelson R."/>
            <person name="Baldwin S."/>
            <person name="Plunkett G. III"/>
            <person name="Burland V."/>
            <person name="Mau B."/>
            <person name="Petrosino J.F."/>
            <person name="Qin X."/>
            <person name="Muzny D.M."/>
            <person name="Ayele M."/>
            <person name="Gibbs R.A."/>
            <person name="Csorgo B."/>
            <person name="Posfai G."/>
            <person name="Weinstock G.M."/>
            <person name="Blattner F.R."/>
        </authorList>
    </citation>
    <scope>NUCLEOTIDE SEQUENCE [LARGE SCALE GENOMIC DNA]</scope>
    <source>
        <strain>K12 / DH10B</strain>
    </source>
</reference>
<feature type="chain" id="PRO_1000132286" description="High frequency lysogenization protein HflD">
    <location>
        <begin position="1"/>
        <end position="213"/>
    </location>
</feature>
<feature type="coiled-coil region" evidence="1">
    <location>
        <begin position="79"/>
        <end position="126"/>
    </location>
</feature>
<keyword id="KW-0997">Cell inner membrane</keyword>
<keyword id="KW-1003">Cell membrane</keyword>
<keyword id="KW-0175">Coiled coil</keyword>
<keyword id="KW-0963">Cytoplasm</keyword>
<keyword id="KW-0472">Membrane</keyword>
<dbReference type="EMBL" id="CP000948">
    <property type="protein sequence ID" value="ACB02325.1"/>
    <property type="molecule type" value="Genomic_DNA"/>
</dbReference>
<dbReference type="RefSeq" id="WP_001297479.1">
    <property type="nucleotide sequence ID" value="NC_010473.1"/>
</dbReference>
<dbReference type="SMR" id="B1XA42"/>
<dbReference type="GeneID" id="93776278"/>
<dbReference type="KEGG" id="ecd:ECDH10B_1204"/>
<dbReference type="HOGENOM" id="CLU_098920_0_0_6"/>
<dbReference type="GO" id="GO:0005737">
    <property type="term" value="C:cytoplasm"/>
    <property type="evidence" value="ECO:0007669"/>
    <property type="project" value="UniProtKB-SubCell"/>
</dbReference>
<dbReference type="GO" id="GO:0005886">
    <property type="term" value="C:plasma membrane"/>
    <property type="evidence" value="ECO:0007669"/>
    <property type="project" value="UniProtKB-SubCell"/>
</dbReference>
<dbReference type="FunFam" id="1.10.3890.10:FF:000001">
    <property type="entry name" value="High frequency lysogenization protein HflD homolog"/>
    <property type="match status" value="1"/>
</dbReference>
<dbReference type="Gene3D" id="1.10.3890.10">
    <property type="entry name" value="HflD-like"/>
    <property type="match status" value="1"/>
</dbReference>
<dbReference type="HAMAP" id="MF_00695">
    <property type="entry name" value="HflD_protein"/>
    <property type="match status" value="1"/>
</dbReference>
<dbReference type="InterPro" id="IPR007451">
    <property type="entry name" value="HflD"/>
</dbReference>
<dbReference type="InterPro" id="IPR035932">
    <property type="entry name" value="HflD-like_sf"/>
</dbReference>
<dbReference type="NCBIfam" id="NF001245">
    <property type="entry name" value="PRK00218.1-1"/>
    <property type="match status" value="1"/>
</dbReference>
<dbReference type="NCBIfam" id="NF001246">
    <property type="entry name" value="PRK00218.1-2"/>
    <property type="match status" value="1"/>
</dbReference>
<dbReference type="NCBIfam" id="NF001248">
    <property type="entry name" value="PRK00218.1-4"/>
    <property type="match status" value="1"/>
</dbReference>
<dbReference type="NCBIfam" id="NF001249">
    <property type="entry name" value="PRK00218.1-5"/>
    <property type="match status" value="1"/>
</dbReference>
<dbReference type="PANTHER" id="PTHR38100">
    <property type="entry name" value="HIGH FREQUENCY LYSOGENIZATION PROTEIN HFLD"/>
    <property type="match status" value="1"/>
</dbReference>
<dbReference type="PANTHER" id="PTHR38100:SF1">
    <property type="entry name" value="HIGH FREQUENCY LYSOGENIZATION PROTEIN HFLD"/>
    <property type="match status" value="1"/>
</dbReference>
<dbReference type="Pfam" id="PF04356">
    <property type="entry name" value="DUF489"/>
    <property type="match status" value="1"/>
</dbReference>
<dbReference type="SUPFAM" id="SSF101322">
    <property type="entry name" value="YcfC-like"/>
    <property type="match status" value="1"/>
</dbReference>
<protein>
    <recommendedName>
        <fullName evidence="1">High frequency lysogenization protein HflD</fullName>
    </recommendedName>
</protein>